<accession>A5UHU7</accession>
<dbReference type="EMBL" id="CP000672">
    <property type="protein sequence ID" value="ABR00353.1"/>
    <property type="molecule type" value="Genomic_DNA"/>
</dbReference>
<dbReference type="SMR" id="A5UHU7"/>
<dbReference type="KEGG" id="hiq:CGSHiGG_07470"/>
<dbReference type="HOGENOM" id="CLU_098841_0_1_6"/>
<dbReference type="Proteomes" id="UP000001990">
    <property type="component" value="Chromosome"/>
</dbReference>
<dbReference type="GO" id="GO:0022625">
    <property type="term" value="C:cytosolic large ribosomal subunit"/>
    <property type="evidence" value="ECO:0007669"/>
    <property type="project" value="TreeGrafter"/>
</dbReference>
<dbReference type="GO" id="GO:0008097">
    <property type="term" value="F:5S rRNA binding"/>
    <property type="evidence" value="ECO:0007669"/>
    <property type="project" value="TreeGrafter"/>
</dbReference>
<dbReference type="GO" id="GO:0003735">
    <property type="term" value="F:structural constituent of ribosome"/>
    <property type="evidence" value="ECO:0007669"/>
    <property type="project" value="InterPro"/>
</dbReference>
<dbReference type="GO" id="GO:0006412">
    <property type="term" value="P:translation"/>
    <property type="evidence" value="ECO:0007669"/>
    <property type="project" value="UniProtKB-UniRule"/>
</dbReference>
<dbReference type="CDD" id="cd00432">
    <property type="entry name" value="Ribosomal_L18_L5e"/>
    <property type="match status" value="1"/>
</dbReference>
<dbReference type="FunFam" id="3.30.420.100:FF:000001">
    <property type="entry name" value="50S ribosomal protein L18"/>
    <property type="match status" value="1"/>
</dbReference>
<dbReference type="Gene3D" id="3.30.420.100">
    <property type="match status" value="1"/>
</dbReference>
<dbReference type="HAMAP" id="MF_01337_B">
    <property type="entry name" value="Ribosomal_uL18_B"/>
    <property type="match status" value="1"/>
</dbReference>
<dbReference type="InterPro" id="IPR004389">
    <property type="entry name" value="Ribosomal_uL18_bac-type"/>
</dbReference>
<dbReference type="InterPro" id="IPR005484">
    <property type="entry name" value="Ribosomal_uL18_bac/euk"/>
</dbReference>
<dbReference type="NCBIfam" id="TIGR00060">
    <property type="entry name" value="L18_bact"/>
    <property type="match status" value="1"/>
</dbReference>
<dbReference type="PANTHER" id="PTHR12899">
    <property type="entry name" value="39S RIBOSOMAL PROTEIN L18, MITOCHONDRIAL"/>
    <property type="match status" value="1"/>
</dbReference>
<dbReference type="PANTHER" id="PTHR12899:SF3">
    <property type="entry name" value="LARGE RIBOSOMAL SUBUNIT PROTEIN UL18M"/>
    <property type="match status" value="1"/>
</dbReference>
<dbReference type="Pfam" id="PF00861">
    <property type="entry name" value="Ribosomal_L18p"/>
    <property type="match status" value="1"/>
</dbReference>
<dbReference type="SUPFAM" id="SSF53137">
    <property type="entry name" value="Translational machinery components"/>
    <property type="match status" value="1"/>
</dbReference>
<keyword id="KW-0687">Ribonucleoprotein</keyword>
<keyword id="KW-0689">Ribosomal protein</keyword>
<keyword id="KW-0694">RNA-binding</keyword>
<keyword id="KW-0699">rRNA-binding</keyword>
<reference key="1">
    <citation type="journal article" date="2007" name="Genome Biol.">
        <title>Characterization and modeling of the Haemophilus influenzae core and supragenomes based on the complete genomic sequences of Rd and 12 clinical nontypeable strains.</title>
        <authorList>
            <person name="Hogg J.S."/>
            <person name="Hu F.Z."/>
            <person name="Janto B."/>
            <person name="Boissy R."/>
            <person name="Hayes J."/>
            <person name="Keefe R."/>
            <person name="Post J.C."/>
            <person name="Ehrlich G.D."/>
        </authorList>
    </citation>
    <scope>NUCLEOTIDE SEQUENCE [LARGE SCALE GENOMIC DNA]</scope>
    <source>
        <strain>PittGG</strain>
    </source>
</reference>
<protein>
    <recommendedName>
        <fullName evidence="1">Large ribosomal subunit protein uL18</fullName>
    </recommendedName>
    <alternativeName>
        <fullName evidence="2">50S ribosomal protein L18</fullName>
    </alternativeName>
</protein>
<sequence>MDKKSARIRRAARARHMMREQGVTRLVIHRTPRHIYAQVIAPNGSEVLAAASTVEKAIREQVKYTGNKDAAAAVGKAVAERALAKGVQAVAFDRSGFKYHGRVQTLADAAREAGLQF</sequence>
<comment type="function">
    <text evidence="1">This is one of the proteins that bind and probably mediate the attachment of the 5S RNA into the large ribosomal subunit, where it forms part of the central protuberance.</text>
</comment>
<comment type="subunit">
    <text evidence="1">Part of the 50S ribosomal subunit; part of the 5S rRNA/L5/L18/L25 subcomplex. Contacts the 5S and 23S rRNAs.</text>
</comment>
<comment type="similarity">
    <text evidence="1">Belongs to the universal ribosomal protein uL18 family.</text>
</comment>
<organism>
    <name type="scientific">Haemophilus influenzae (strain PittGG)</name>
    <dbReference type="NCBI Taxonomy" id="374931"/>
    <lineage>
        <taxon>Bacteria</taxon>
        <taxon>Pseudomonadati</taxon>
        <taxon>Pseudomonadota</taxon>
        <taxon>Gammaproteobacteria</taxon>
        <taxon>Pasteurellales</taxon>
        <taxon>Pasteurellaceae</taxon>
        <taxon>Haemophilus</taxon>
    </lineage>
</organism>
<evidence type="ECO:0000255" key="1">
    <source>
        <dbReference type="HAMAP-Rule" id="MF_01337"/>
    </source>
</evidence>
<evidence type="ECO:0000305" key="2"/>
<name>RL18_HAEIG</name>
<gene>
    <name evidence="1" type="primary">rplR</name>
    <name type="ordered locus">CGSHiGG_07470</name>
</gene>
<proteinExistence type="inferred from homology"/>
<feature type="chain" id="PRO_1000053032" description="Large ribosomal subunit protein uL18">
    <location>
        <begin position="1"/>
        <end position="117"/>
    </location>
</feature>